<evidence type="ECO:0000255" key="1">
    <source>
        <dbReference type="HAMAP-Rule" id="MF_04086"/>
    </source>
</evidence>
<reference key="1">
    <citation type="journal article" date="2003" name="Virology">
        <title>New insights into the evolutionary relationships between arenaviruses provided by comparative analysis of small and large segment sequences.</title>
        <authorList>
            <person name="Charrel R.N."/>
            <person name="Lemasson J.J."/>
            <person name="Garbutt M."/>
            <person name="Khelifa R."/>
            <person name="De Micco P."/>
            <person name="Feldmann H."/>
            <person name="de Lamballerie X."/>
        </authorList>
    </citation>
    <scope>NUCLEOTIDE SEQUENCE [GENOMIC RNA]</scope>
</reference>
<reference key="2">
    <citation type="submission" date="2004-05" db="EMBL/GenBank/DDBJ databases">
        <title>Complete sequence determination and analysis of the large RNA segment of arenaviruses.</title>
        <authorList>
            <person name="Emonet S."/>
            <person name="de Lamballerie X."/>
            <person name="de Micco P."/>
            <person name="Charrel R.N."/>
        </authorList>
    </citation>
    <scope>NUCLEOTIDE SEQUENCE [GENOMIC RNA]</scope>
</reference>
<reference key="3">
    <citation type="journal article" date="2017" name="Crit. Rev. Microbiol.">
        <title>Bunyaviridae RdRps: structure, motifs, and RNA synthesis machinery.</title>
        <authorList>
            <person name="Amroun A."/>
            <person name="Priet S."/>
            <person name="de Lamballerie X."/>
            <person name="Querat G."/>
        </authorList>
    </citation>
    <scope>REVIEW</scope>
</reference>
<reference key="4">
    <citation type="journal article" date="2020" name="Trends Microbiol.">
        <title>The Cap-Snatching Mechanism of Bunyaviruses.</title>
        <authorList>
            <person name="Olschewski S."/>
            <person name="Cusack S."/>
            <person name="Rosenthal M."/>
        </authorList>
    </citation>
    <scope>REVIEW</scope>
</reference>
<sequence length="2201" mass="252792">MDVHLIELRDLVRKWVPDDLELSEQKNIMLAQTQIRATVVESLKLLSTIVEVDSCKKHSCVHNTSKTVNAILREHKIIGPTLPDVTPDGYCVIGDVLILLEVFVRTNQESFEKKFNQDFEKLMQMSADLKKCGVTLVPTIDGRSTYYVDFIPDWVVERLRWLISRLMSSLREDGQEIEELEYERLISSLSSLENQSLGLESLLAMREKGLSYKETLDKLFLEGMENKLTVDESRTRIMKMFQIFRTLLESGYLERKYQTTDREDMLKRLRDHEFIVCSKSVEYTFDCPNCSVHLYKVLNLLLNQGSRGAPHQCLGEYMKTLSICNKIKSMKILNTRRNTLLILDTIMLNKFLDLEKVFGHVVVERVMIMQSLMTVNDRLLSIDVLMEMLEKKMTRNPLWFLKVNEKLRKLCPPEVYQSIEEYVHEVDRDHWFELKLTLHQTWPAKPLIDYKGKMRCTCVEKDSNNKNQLSDLTEEKFQLLLKKLSSFCLGITNSLKTSAVAKLRVNQPDDYYGKVTCSEVFFQSLDKEHSAVLLYQKTGEKSRAYGLAFNNVVTGQYTTEASFYCDPKRFFLPIMSDVVLFRMCNEMLSWLDYLSDDVMLEVRTCLYRLVLSILCTPSKRVQVYIQGLRYFIMAFVNEFHCTGLLDKLKVTALTESERYCMKLCDDLVVKVLNSVEDENMAKAFKFVLNTSYLCHLITKETPDRLTDQIKCFEKFLEPKLDFGSVIVNPDSSCELTAGQEEQFYQGLEKLFTDKKLESSYANKPGVCKEVLNVCMSLFNSGALEVKPLLNHDPITPSFTSTALDLSSNKSVVVPKLDELGEVLTEYDYSKLVSSVVVDLVEHFKTKGKYVVSPRSLQYKIYKRLSNLVQQRAGKGNKESELTEEEFLEQVTAEQLEVINKVETKVSRTLSGIKLSSDTENAKHDDDYHLKKLWSKDIMVRIKAETSLHEVKDFNVDTLPFDLYRELVDAIYNDPAANSHYFSERIFNPCPLELLIKNLTLKAYKEEDFFECFKYILISSNFDNKVGKYDHKNRSRLGLSSAALLVKDEARISMRESNSESIAKRLDKSFFTNSSLRNLCFYSDESPTERTSVSSNVGKLKFGLSYKEQVGGNRELYVGDLNTKLTTRLVEDYAESLTSDMKYTCLNNENEFERALLDMKSVVRQSGLAVSMDHSKWGPHMSPALFSLMLRGLDFRLKDGTLIDKEAVVNILSWHIHKMVEVPFNVVEAYLKGFIKRGLGLMDRGGATRVEEFMFGYFDQGIVPSHISSVIDMGQGILHNLSDLYGLITEQFIVYALDLCYSSSFMAYTSSDDEILLSISNSFKRNDGSMDMDLAIEALEFHYFLSDRLNKFVSPKTVAGTFASEFKSRFFIWSQEVPLLTKFVAASLHNVKAKAPSQLAETIDTILDQSVANGVSIEIIGAIAPRTNALITYSGHPFNLFLCLEETDVRDWVDGSRGYRLQRSIENAFPDDVLPEIIRSACRKIFYRIQSGTLEEDYIVTTLQQSPDDCLKQMLTSCDVEKEAIDDICNYRWLNLRAHGDLRLVLRTKIMTSTRTLQKEEVPSLIKSVQSKLSKNFVRGAKKILADAINKSAFQSCISSGFVGVCKSMGSKCVRDGKGGFKYIKDILKEIKHHEKPDCHFCKELKGIYCSELLENISEFSRPLFWDYFSLVLSNACELGNWVFCKIEIPKSVYHLNNPNHFWPIKPSSHAELEEKVGMNHVLYSIRRNFPVLFDEHISPYLSDLNMLKLNWVQKIRFLDICVAIDMTSECLGIISHIIRRKREELYIVKQSELSMSHTRVSLPLERGFNIEPDEVCHNFLLQILFESMIHPVLLTTSQFKRYFWYSEVELLPKEALHDLGQFTQFIIDCKVLNSSRAMCLDDLDVGYVSSKVKRTDTYLNLSTFMTNLDWENRHEYSSFEDLILSSPSEVFLFEITFTFSHIRRSHKFRYDRSTNYILKTKLVIEKSELVNGEDGVYCVTPHSIEYYVSQSSGNHISLDGVSLLVLDPLISGRELVNMDELLQNQDVTFSAPSQILSKIKLDFKPFTKEIKNKFSYKLIGPDVDMSPLHLDKGAIKEGDRIVSQIEIQVSFKSVITAIELLDEDQRKIFVGNLFVYLTSLKSVNRALSMSESDLRLLVENYPSVIEYMLSGCDGWLNCGSFSLIKSKTLQCIMLADERGPYRIKGQNCRRLFPTEEAIEIE</sequence>
<proteinExistence type="inferred from homology"/>
<feature type="chain" id="PRO_0000361632" description="RNA-directed RNA polymerase L">
    <location>
        <begin position="1"/>
        <end position="2201"/>
    </location>
</feature>
<feature type="domain" description="RdRp catalytic" evidence="1">
    <location>
        <begin position="1156"/>
        <end position="1352"/>
    </location>
</feature>
<feature type="region of interest" description="Endonuclease" evidence="1">
    <location>
        <begin position="26"/>
        <end position="285"/>
    </location>
</feature>
<feature type="active site" evidence="1">
    <location>
        <position position="114"/>
    </location>
</feature>
<feature type="binding site" evidence="1">
    <location>
        <position position="51"/>
    </location>
    <ligand>
        <name>Mn(2+)</name>
        <dbReference type="ChEBI" id="CHEBI:29035"/>
        <label>1</label>
    </ligand>
</feature>
<feature type="binding site" evidence="1">
    <location>
        <position position="88"/>
    </location>
    <ligand>
        <name>Mn(2+)</name>
        <dbReference type="ChEBI" id="CHEBI:29035"/>
        <label>1</label>
    </ligand>
</feature>
<feature type="binding site" evidence="1">
    <location>
        <position position="88"/>
    </location>
    <ligand>
        <name>Mn(2+)</name>
        <dbReference type="ChEBI" id="CHEBI:29035"/>
        <label>2</label>
    </ligand>
</feature>
<feature type="binding site" evidence="1">
    <location>
        <position position="101"/>
    </location>
    <ligand>
        <name>Mn(2+)</name>
        <dbReference type="ChEBI" id="CHEBI:29035"/>
        <label>1</label>
    </ligand>
</feature>
<feature type="binding site" evidence="1">
    <location>
        <position position="1312"/>
    </location>
    <ligand>
        <name>Mg(2+)</name>
        <dbReference type="ChEBI" id="CHEBI:18420"/>
        <note>catalytic; for RdRp activity</note>
    </ligand>
</feature>
<comment type="function">
    <text evidence="1">RNA-dependent RNA polymerase, which is responsible for the replication and transcription of the viral RNA genome using antigenomic RNA as an intermediate. During transcription, synthesizes subgenomic RNAs and assures their capping by a cap-snatching mechanism, which involves the endonuclease activity cleaving the host capped pre-mRNAs. These short capped RNAs are then used as primers for viral transcription. The 3'-end of subgenomic mRNAs molecules are heterogeneous and not polyadenylated. The replicase function is to direct synthesis of antigenomic and genomic RNA which are encapsidated and non capped. As a consequence of the use of the same enzyme for both transcription and replication, these mechanisms need to be well coordinated. These processes may be regulated by proteins N and Z in a dose-dependent manner. Z protein inhibits the viral polymerase L und thus the viral transcription and RNA synthesis.</text>
</comment>
<comment type="catalytic activity">
    <reaction evidence="1">
        <text>RNA(n) + a ribonucleoside 5'-triphosphate = RNA(n+1) + diphosphate</text>
        <dbReference type="Rhea" id="RHEA:21248"/>
        <dbReference type="Rhea" id="RHEA-COMP:14527"/>
        <dbReference type="Rhea" id="RHEA-COMP:17342"/>
        <dbReference type="ChEBI" id="CHEBI:33019"/>
        <dbReference type="ChEBI" id="CHEBI:61557"/>
        <dbReference type="ChEBI" id="CHEBI:140395"/>
        <dbReference type="EC" id="2.7.7.48"/>
    </reaction>
</comment>
<comment type="cofactor">
    <cofactor evidence="1">
        <name>Mn(2+)</name>
        <dbReference type="ChEBI" id="CHEBI:29035"/>
    </cofactor>
    <text evidence="1">For endonuclease activity. Binds 2 Mn(2+) ions in the active site. The divalent metal ions are crucial for catalytic activity.</text>
</comment>
<comment type="cofactor">
    <cofactor evidence="1">
        <name>Mg(2+)</name>
        <dbReference type="ChEBI" id="CHEBI:18420"/>
    </cofactor>
    <cofactor evidence="1">
        <name>Mn(2+)</name>
        <dbReference type="ChEBI" id="CHEBI:29035"/>
    </cofactor>
    <text evidence="1">For polymerase activity.</text>
</comment>
<comment type="subunit">
    <text evidence="1">Homomultimer; the oligomeric structure is essential for the polymerase activity. Interacts with nucleoprotein N. Interacts with protein Z; this interaction inhibits viral transcription and replication, Z partially blocks the product exit tunnel for the releasing nascent RNA product.</text>
</comment>
<comment type="subcellular location">
    <subcellularLocation>
        <location evidence="1">Virion</location>
    </subcellularLocation>
    <subcellularLocation>
        <location evidence="1">Host cytoplasm</location>
    </subcellularLocation>
</comment>
<comment type="domain">
    <text evidence="1">The N-terminus contains the endonuclease activity (endoN). The central region contains the RdRp activity.</text>
</comment>
<comment type="miscellaneous">
    <text evidence="1">Classified as His(-) endonuclease since it does not have a histidine upstream of the active site that coordinates the first cation. His(-) endonucleases display very low activity in vitro, although they are clearly active in vivo.</text>
</comment>
<comment type="similarity">
    <text evidence="1">Belongs to the Bunyavirales RNA polymerase family.</text>
</comment>
<gene>
    <name evidence="1" type="primary">L</name>
</gene>
<name>L_ALLVP</name>
<keyword id="KW-1157">Cap snatching</keyword>
<keyword id="KW-1035">Host cytoplasm</keyword>
<keyword id="KW-0378">Hydrolase</keyword>
<keyword id="KW-0460">Magnesium</keyword>
<keyword id="KW-0464">Manganese</keyword>
<keyword id="KW-0479">Metal-binding</keyword>
<keyword id="KW-0547">Nucleotide-binding</keyword>
<keyword id="KW-0548">Nucleotidyltransferase</keyword>
<keyword id="KW-0696">RNA-directed RNA polymerase</keyword>
<keyword id="KW-0808">Transferase</keyword>
<keyword id="KW-0693">Viral RNA replication</keyword>
<keyword id="KW-0946">Virion</keyword>
<organismHost>
    <name type="scientific">Oecomys bicolor</name>
    <name type="common">Bicolored arboreal rice rat</name>
    <dbReference type="NCBI Taxonomy" id="48011"/>
</organismHost>
<organismHost>
    <name type="scientific">Oecomys roberti</name>
    <name type="common">Robert's arboreal rice rat</name>
    <dbReference type="NCBI Taxonomy" id="48012"/>
</organismHost>
<accession>Q6XQI9</accession>
<organism>
    <name type="scientific">Allpahuayo mammarenavirus (isolate Rat/Peru/CLHP-2472/1997)</name>
    <name type="common">ALLV</name>
    <dbReference type="NCBI Taxonomy" id="144752"/>
    <lineage>
        <taxon>Viruses</taxon>
        <taxon>Riboviria</taxon>
        <taxon>Orthornavirae</taxon>
        <taxon>Negarnaviricota</taxon>
        <taxon>Polyploviricotina</taxon>
        <taxon>Ellioviricetes</taxon>
        <taxon>Bunyavirales</taxon>
        <taxon>Arenaviridae</taxon>
        <taxon>Mammarenavirus</taxon>
    </lineage>
</organism>
<protein>
    <recommendedName>
        <fullName evidence="1">RNA-directed RNA polymerase L</fullName>
        <shortName evidence="1">Protein L</shortName>
        <ecNumber evidence="1">2.7.7.48</ecNumber>
    </recommendedName>
    <alternativeName>
        <fullName evidence="1">Large structural protein</fullName>
    </alternativeName>
    <alternativeName>
        <fullName evidence="1">Replicase</fullName>
    </alternativeName>
    <alternativeName>
        <fullName evidence="1">Transcriptase</fullName>
    </alternativeName>
    <domain>
        <recommendedName>
            <fullName evidence="1">cap-snatching endonuclease</fullName>
            <ecNumber evidence="1">3.1.-.-</ecNumber>
        </recommendedName>
    </domain>
</protein>
<dbReference type="EC" id="2.7.7.48" evidence="1"/>
<dbReference type="EC" id="3.1.-.-" evidence="1"/>
<dbReference type="EMBL" id="AY216502">
    <property type="protein sequence ID" value="AAP44538.2"/>
    <property type="molecule type" value="Genomic_RNA"/>
</dbReference>
<dbReference type="RefSeq" id="YP_001649212.1">
    <property type="nucleotide sequence ID" value="NC_010249.1"/>
</dbReference>
<dbReference type="SMR" id="Q6XQI9"/>
<dbReference type="KEGG" id="vg:5848365"/>
<dbReference type="Proteomes" id="UP000009258">
    <property type="component" value="Genome"/>
</dbReference>
<dbReference type="GO" id="GO:0030430">
    <property type="term" value="C:host cell cytoplasm"/>
    <property type="evidence" value="ECO:0007669"/>
    <property type="project" value="UniProtKB-SubCell"/>
</dbReference>
<dbReference type="GO" id="GO:0044423">
    <property type="term" value="C:virion component"/>
    <property type="evidence" value="ECO:0007669"/>
    <property type="project" value="UniProtKB-KW"/>
</dbReference>
<dbReference type="GO" id="GO:0016787">
    <property type="term" value="F:hydrolase activity"/>
    <property type="evidence" value="ECO:0007669"/>
    <property type="project" value="UniProtKB-KW"/>
</dbReference>
<dbReference type="GO" id="GO:0046872">
    <property type="term" value="F:metal ion binding"/>
    <property type="evidence" value="ECO:0007669"/>
    <property type="project" value="UniProtKB-KW"/>
</dbReference>
<dbReference type="GO" id="GO:0000166">
    <property type="term" value="F:nucleotide binding"/>
    <property type="evidence" value="ECO:0007669"/>
    <property type="project" value="UniProtKB-UniRule"/>
</dbReference>
<dbReference type="GO" id="GO:0003968">
    <property type="term" value="F:RNA-directed RNA polymerase activity"/>
    <property type="evidence" value="ECO:0007669"/>
    <property type="project" value="UniProtKB-UniRule"/>
</dbReference>
<dbReference type="GO" id="GO:0075526">
    <property type="term" value="P:cap snatching"/>
    <property type="evidence" value="ECO:0007669"/>
    <property type="project" value="UniProtKB-UniRule"/>
</dbReference>
<dbReference type="GO" id="GO:0039689">
    <property type="term" value="P:negative stranded viral RNA replication"/>
    <property type="evidence" value="ECO:0000250"/>
    <property type="project" value="UniProtKB"/>
</dbReference>
<dbReference type="GO" id="GO:0039696">
    <property type="term" value="P:RNA-templated viral transcription"/>
    <property type="evidence" value="ECO:0000250"/>
    <property type="project" value="UniProtKB"/>
</dbReference>
<dbReference type="Gene3D" id="3.30.70.2640">
    <property type="entry name" value="Arenavirus RNA polymerase"/>
    <property type="match status" value="1"/>
</dbReference>
<dbReference type="Gene3D" id="1.20.1440.300">
    <property type="entry name" value="RNA-directed RNA polymerase L, helical domain"/>
    <property type="match status" value="1"/>
</dbReference>
<dbReference type="HAMAP" id="MF_04086">
    <property type="entry name" value="ARENA_L"/>
    <property type="match status" value="1"/>
</dbReference>
<dbReference type="InterPro" id="IPR026382">
    <property type="entry name" value="CapSnatch_arenavir"/>
</dbReference>
<dbReference type="InterPro" id="IPR048006">
    <property type="entry name" value="CapSnatch_bunyavir"/>
</dbReference>
<dbReference type="InterPro" id="IPR007099">
    <property type="entry name" value="RNA-dir_pol_NSvirus"/>
</dbReference>
<dbReference type="InterPro" id="IPR010453">
    <property type="entry name" value="RNA_pol_arenavir"/>
</dbReference>
<dbReference type="NCBIfam" id="TIGR04202">
    <property type="entry name" value="capSnatchArena"/>
    <property type="match status" value="1"/>
</dbReference>
<dbReference type="Pfam" id="PF06317">
    <property type="entry name" value="Arena_RNA_pol"/>
    <property type="match status" value="1"/>
</dbReference>
<dbReference type="Pfam" id="PF17296">
    <property type="entry name" value="ArenaCapSnatch"/>
    <property type="match status" value="1"/>
</dbReference>
<dbReference type="PIRSF" id="PIRSF000836">
    <property type="entry name" value="L_ArenaV"/>
    <property type="match status" value="1"/>
</dbReference>
<dbReference type="PROSITE" id="PS50525">
    <property type="entry name" value="RDRP_SSRNA_NEG_SEG"/>
    <property type="match status" value="1"/>
</dbReference>